<sequence length="159" mass="18783">MQQGWLSNWLVKHEVVHRSLGFDHRGIETLQIKAEDWDSIAVILYVYGYNYLRSQCAYDVAPGGSLASVYHLTRIQYGIDNPEEVCIKVFAQKDNPRIPSVFWIWRSSDFQERESFDMVGISYDNHPRLKRILMPESWIGWPLRKDYITPNFYEIQDAH</sequence>
<reference key="1">
    <citation type="journal article" date="1989" name="Mol. Gen. Genet.">
        <title>The complete sequence of the rice (Oryza sativa) chloroplast genome: intermolecular recombination between distinct tRNA genes accounts for a major plastid DNA inversion during the evolution of the cereals.</title>
        <authorList>
            <person name="Hiratsuka J."/>
            <person name="Shimada H."/>
            <person name="Whittier R."/>
            <person name="Ishibashi T."/>
            <person name="Sakamoto M."/>
            <person name="Mori M."/>
            <person name="Kondo C."/>
            <person name="Honji Y."/>
            <person name="Sun C.-R."/>
            <person name="Meng B.-Y."/>
            <person name="Li Y.-Q."/>
            <person name="Kanno A."/>
            <person name="Nishizawa Y."/>
            <person name="Hirai A."/>
            <person name="Shinozaki K."/>
            <person name="Sugiura M."/>
        </authorList>
    </citation>
    <scope>NUCLEOTIDE SEQUENCE [LARGE SCALE GENOMIC DNA]</scope>
    <source>
        <strain>cv. Nipponbare</strain>
    </source>
</reference>
<reference key="2">
    <citation type="journal article" date="2004" name="Plant Physiol.">
        <title>A comparison of rice chloroplast genomes.</title>
        <authorList>
            <person name="Tang J."/>
            <person name="Xia H."/>
            <person name="Cao M."/>
            <person name="Zhang X."/>
            <person name="Zeng W."/>
            <person name="Hu S."/>
            <person name="Tong W."/>
            <person name="Wang J."/>
            <person name="Wang J."/>
            <person name="Yu J."/>
            <person name="Yang H."/>
            <person name="Zhu L."/>
        </authorList>
    </citation>
    <scope>NUCLEOTIDE SEQUENCE [LARGE SCALE GENOMIC DNA]</scope>
    <source>
        <strain>cv. Nipponbare</strain>
    </source>
</reference>
<geneLocation type="chloroplast"/>
<dbReference type="EC" id="7.1.1.-" evidence="1"/>
<dbReference type="EMBL" id="X15901">
    <property type="protein sequence ID" value="CAA33999.1"/>
    <property type="molecule type" value="Genomic_DNA"/>
</dbReference>
<dbReference type="EMBL" id="AY522330">
    <property type="protein sequence ID" value="AAS46123.1"/>
    <property type="status" value="ALT_INIT"/>
    <property type="molecule type" value="Genomic_DNA"/>
</dbReference>
<dbReference type="PIR" id="S05106">
    <property type="entry name" value="S05106"/>
</dbReference>
<dbReference type="RefSeq" id="NP_039386.1">
    <property type="nucleotide sequence ID" value="NC_001320.1"/>
</dbReference>
<dbReference type="SMR" id="P0C340"/>
<dbReference type="FunCoup" id="P0C340">
    <property type="interactions" value="27"/>
</dbReference>
<dbReference type="STRING" id="39947.P0C340"/>
<dbReference type="PaxDb" id="39947-P0C340"/>
<dbReference type="GeneID" id="3131458"/>
<dbReference type="KEGG" id="dosa:CAA33999.1"/>
<dbReference type="KEGG" id="osa:3131458"/>
<dbReference type="InParanoid" id="P0C340"/>
<dbReference type="OrthoDB" id="580589at2759"/>
<dbReference type="Proteomes" id="UP000059680">
    <property type="component" value="Chloroplast"/>
</dbReference>
<dbReference type="GO" id="GO:0009535">
    <property type="term" value="C:chloroplast thylakoid membrane"/>
    <property type="evidence" value="ECO:0007669"/>
    <property type="project" value="UniProtKB-SubCell"/>
</dbReference>
<dbReference type="GO" id="GO:0009536">
    <property type="term" value="C:plastid"/>
    <property type="evidence" value="ECO:0000305"/>
    <property type="project" value="Gramene"/>
</dbReference>
<dbReference type="GO" id="GO:0008137">
    <property type="term" value="F:NADH dehydrogenase (ubiquinone) activity"/>
    <property type="evidence" value="ECO:0007669"/>
    <property type="project" value="InterPro"/>
</dbReference>
<dbReference type="GO" id="GO:0048038">
    <property type="term" value="F:quinone binding"/>
    <property type="evidence" value="ECO:0007669"/>
    <property type="project" value="UniProtKB-KW"/>
</dbReference>
<dbReference type="GO" id="GO:0019684">
    <property type="term" value="P:photosynthesis, light reaction"/>
    <property type="evidence" value="ECO:0007669"/>
    <property type="project" value="UniProtKB-UniRule"/>
</dbReference>
<dbReference type="Gene3D" id="3.30.460.80">
    <property type="entry name" value="NADH:ubiquinone oxidoreductase, 30kDa subunit"/>
    <property type="match status" value="1"/>
</dbReference>
<dbReference type="HAMAP" id="MF_01357">
    <property type="entry name" value="NDH1_NuoC"/>
    <property type="match status" value="1"/>
</dbReference>
<dbReference type="InterPro" id="IPR010218">
    <property type="entry name" value="NADH_DH_suC"/>
</dbReference>
<dbReference type="InterPro" id="IPR037232">
    <property type="entry name" value="NADH_quin_OxRdtase_su_C/D-like"/>
</dbReference>
<dbReference type="InterPro" id="IPR001268">
    <property type="entry name" value="NADH_UbQ_OxRdtase_30kDa_su"/>
</dbReference>
<dbReference type="InterPro" id="IPR020396">
    <property type="entry name" value="NADH_UbQ_OxRdtase_CS"/>
</dbReference>
<dbReference type="NCBIfam" id="NF009141">
    <property type="entry name" value="PRK12494.1"/>
    <property type="match status" value="1"/>
</dbReference>
<dbReference type="PANTHER" id="PTHR10884:SF14">
    <property type="entry name" value="NADH DEHYDROGENASE [UBIQUINONE] IRON-SULFUR PROTEIN 3, MITOCHONDRIAL"/>
    <property type="match status" value="1"/>
</dbReference>
<dbReference type="PANTHER" id="PTHR10884">
    <property type="entry name" value="NADH DEHYDROGENASE UBIQUINONE IRON-SULFUR PROTEIN 3"/>
    <property type="match status" value="1"/>
</dbReference>
<dbReference type="Pfam" id="PF00329">
    <property type="entry name" value="Complex1_30kDa"/>
    <property type="match status" value="1"/>
</dbReference>
<dbReference type="SUPFAM" id="SSF143243">
    <property type="entry name" value="Nqo5-like"/>
    <property type="match status" value="1"/>
</dbReference>
<dbReference type="PROSITE" id="PS00542">
    <property type="entry name" value="COMPLEX1_30K"/>
    <property type="match status" value="1"/>
</dbReference>
<comment type="function">
    <text evidence="1">NDH shuttles electrons from NAD(P)H:plastoquinone, via FMN and iron-sulfur (Fe-S) centers, to quinones in the photosynthetic chain and possibly in a chloroplast respiratory chain. The immediate electron acceptor for the enzyme in this species is believed to be plastoquinone. Couples the redox reaction to proton translocation, and thus conserves the redox energy in a proton gradient.</text>
</comment>
<comment type="catalytic activity">
    <reaction evidence="1">
        <text>a plastoquinone + NADH + (n+1) H(+)(in) = a plastoquinol + NAD(+) + n H(+)(out)</text>
        <dbReference type="Rhea" id="RHEA:42608"/>
        <dbReference type="Rhea" id="RHEA-COMP:9561"/>
        <dbReference type="Rhea" id="RHEA-COMP:9562"/>
        <dbReference type="ChEBI" id="CHEBI:15378"/>
        <dbReference type="ChEBI" id="CHEBI:17757"/>
        <dbReference type="ChEBI" id="CHEBI:57540"/>
        <dbReference type="ChEBI" id="CHEBI:57945"/>
        <dbReference type="ChEBI" id="CHEBI:62192"/>
    </reaction>
</comment>
<comment type="catalytic activity">
    <reaction evidence="1">
        <text>a plastoquinone + NADPH + (n+1) H(+)(in) = a plastoquinol + NADP(+) + n H(+)(out)</text>
        <dbReference type="Rhea" id="RHEA:42612"/>
        <dbReference type="Rhea" id="RHEA-COMP:9561"/>
        <dbReference type="Rhea" id="RHEA-COMP:9562"/>
        <dbReference type="ChEBI" id="CHEBI:15378"/>
        <dbReference type="ChEBI" id="CHEBI:17757"/>
        <dbReference type="ChEBI" id="CHEBI:57783"/>
        <dbReference type="ChEBI" id="CHEBI:58349"/>
        <dbReference type="ChEBI" id="CHEBI:62192"/>
    </reaction>
</comment>
<comment type="subunit">
    <text evidence="1">NDH is composed of at least 16 different subunits, 5 of which are encoded in the nucleus.</text>
</comment>
<comment type="subcellular location">
    <subcellularLocation>
        <location evidence="1">Plastid</location>
        <location evidence="1">Chloroplast thylakoid membrane</location>
        <topology evidence="1">Peripheral membrane protein</topology>
        <orientation evidence="1">Stromal side</orientation>
    </subcellularLocation>
</comment>
<comment type="similarity">
    <text evidence="1">Belongs to the complex I 30 kDa subunit family.</text>
</comment>
<comment type="sequence caution" evidence="2">
    <conflict type="erroneous initiation">
        <sequence resource="EMBL-CDS" id="AAS46123"/>
    </conflict>
</comment>
<accession>P0C340</accession>
<accession>P12200</accession>
<accession>Q6QY08</accession>
<accession>Q6QY72</accession>
<keyword id="KW-0150">Chloroplast</keyword>
<keyword id="KW-0472">Membrane</keyword>
<keyword id="KW-0520">NAD</keyword>
<keyword id="KW-0521">NADP</keyword>
<keyword id="KW-0934">Plastid</keyword>
<keyword id="KW-0618">Plastoquinone</keyword>
<keyword id="KW-0874">Quinone</keyword>
<keyword id="KW-1185">Reference proteome</keyword>
<keyword id="KW-0793">Thylakoid</keyword>
<keyword id="KW-1278">Translocase</keyword>
<keyword id="KW-0813">Transport</keyword>
<gene>
    <name evidence="1" type="primary">ndhJ</name>
    <name type="ordered locus">LOC_Osp1g00370</name>
    <name type="ORF">Nip057</name>
</gene>
<proteinExistence type="inferred from homology"/>
<name>NDHJ_ORYSJ</name>
<organism>
    <name type="scientific">Oryza sativa subsp. japonica</name>
    <name type="common">Rice</name>
    <dbReference type="NCBI Taxonomy" id="39947"/>
    <lineage>
        <taxon>Eukaryota</taxon>
        <taxon>Viridiplantae</taxon>
        <taxon>Streptophyta</taxon>
        <taxon>Embryophyta</taxon>
        <taxon>Tracheophyta</taxon>
        <taxon>Spermatophyta</taxon>
        <taxon>Magnoliopsida</taxon>
        <taxon>Liliopsida</taxon>
        <taxon>Poales</taxon>
        <taxon>Poaceae</taxon>
        <taxon>BOP clade</taxon>
        <taxon>Oryzoideae</taxon>
        <taxon>Oryzeae</taxon>
        <taxon>Oryzinae</taxon>
        <taxon>Oryza</taxon>
        <taxon>Oryza sativa</taxon>
    </lineage>
</organism>
<feature type="chain" id="PRO_0000288705" description="NAD(P)H-quinone oxidoreductase subunit J, chloroplastic">
    <location>
        <begin position="1"/>
        <end position="159"/>
    </location>
</feature>
<evidence type="ECO:0000255" key="1">
    <source>
        <dbReference type="HAMAP-Rule" id="MF_01357"/>
    </source>
</evidence>
<evidence type="ECO:0000305" key="2"/>
<protein>
    <recommendedName>
        <fullName evidence="1">NAD(P)H-quinone oxidoreductase subunit J, chloroplastic</fullName>
        <ecNumber evidence="1">7.1.1.-</ecNumber>
    </recommendedName>
    <alternativeName>
        <fullName>NAD(P)H dehydrogenase subunit J</fullName>
    </alternativeName>
    <alternativeName>
        <fullName evidence="1">NADH-plastoquinone oxidoreductase subunit J</fullName>
    </alternativeName>
</protein>